<protein>
    <recommendedName>
        <fullName evidence="1">Xanthine phosphoribosyltransferase 2</fullName>
        <shortName evidence="1">XPRTase 2</shortName>
        <ecNumber evidence="1">2.4.2.22</ecNumber>
    </recommendedName>
</protein>
<sequence length="192" mass="21796">MELLKDKIKKEGRVTEDNILMVDSFLNHQMDVEFFNEVGKEFKDRFKNDQIDKILTIESTGIGLGIITAQYFDNVPVVFGKKIERLPRNKREEVFNSEVYSFTKKTIYNVVVDKKFIKPGEKILIVDDFLANACAVFGLIDVVKQAGAEVVGVGIVIEKGFQSGRAHLEDKGIRVESLVTIDKIEDGEVYFK</sequence>
<keyword id="KW-0963">Cytoplasm</keyword>
<keyword id="KW-0328">Glycosyltransferase</keyword>
<keyword id="KW-0660">Purine salvage</keyword>
<keyword id="KW-0808">Transferase</keyword>
<feature type="chain" id="PRO_0000339690" description="Xanthine phosphoribosyltransferase 2">
    <location>
        <begin position="1"/>
        <end position="192"/>
    </location>
</feature>
<feature type="binding site" evidence="1">
    <location>
        <position position="20"/>
    </location>
    <ligand>
        <name>xanthine</name>
        <dbReference type="ChEBI" id="CHEBI:17712"/>
    </ligand>
</feature>
<feature type="binding site" evidence="1">
    <location>
        <position position="27"/>
    </location>
    <ligand>
        <name>xanthine</name>
        <dbReference type="ChEBI" id="CHEBI:17712"/>
    </ligand>
</feature>
<feature type="binding site" evidence="1">
    <location>
        <begin position="131"/>
        <end position="135"/>
    </location>
    <ligand>
        <name>5-phospho-alpha-D-ribose 1-diphosphate</name>
        <dbReference type="ChEBI" id="CHEBI:58017"/>
    </ligand>
</feature>
<feature type="binding site" evidence="1">
    <location>
        <position position="159"/>
    </location>
    <ligand>
        <name>xanthine</name>
        <dbReference type="ChEBI" id="CHEBI:17712"/>
    </ligand>
</feature>
<evidence type="ECO:0000255" key="1">
    <source>
        <dbReference type="HAMAP-Rule" id="MF_01184"/>
    </source>
</evidence>
<comment type="function">
    <text evidence="1">Converts the preformed base xanthine, a product of nucleic acid breakdown, to xanthosine 5'-monophosphate (XMP), so it can be reused for RNA or DNA synthesis.</text>
</comment>
<comment type="catalytic activity">
    <reaction evidence="1">
        <text>XMP + diphosphate = xanthine + 5-phospho-alpha-D-ribose 1-diphosphate</text>
        <dbReference type="Rhea" id="RHEA:10800"/>
        <dbReference type="ChEBI" id="CHEBI:17712"/>
        <dbReference type="ChEBI" id="CHEBI:33019"/>
        <dbReference type="ChEBI" id="CHEBI:57464"/>
        <dbReference type="ChEBI" id="CHEBI:58017"/>
        <dbReference type="EC" id="2.4.2.22"/>
    </reaction>
</comment>
<comment type="pathway">
    <text evidence="1">Purine metabolism; XMP biosynthesis via salvage pathway; XMP from xanthine: step 1/1.</text>
</comment>
<comment type="subunit">
    <text evidence="1">Homodimer.</text>
</comment>
<comment type="subcellular location">
    <subcellularLocation>
        <location evidence="1">Cytoplasm</location>
    </subcellularLocation>
</comment>
<comment type="similarity">
    <text evidence="1">Belongs to the purine/pyrimidine phosphoribosyltransferase family. Xpt subfamily.</text>
</comment>
<gene>
    <name evidence="1" type="primary">xpt2</name>
    <name type="ordered locus">CPF_1498</name>
</gene>
<reference key="1">
    <citation type="journal article" date="2006" name="Genome Res.">
        <title>Skewed genomic variability in strains of the toxigenic bacterial pathogen, Clostridium perfringens.</title>
        <authorList>
            <person name="Myers G.S.A."/>
            <person name="Rasko D.A."/>
            <person name="Cheung J.K."/>
            <person name="Ravel J."/>
            <person name="Seshadri R."/>
            <person name="DeBoy R.T."/>
            <person name="Ren Q."/>
            <person name="Varga J."/>
            <person name="Awad M.M."/>
            <person name="Brinkac L.M."/>
            <person name="Daugherty S.C."/>
            <person name="Haft D.H."/>
            <person name="Dodson R.J."/>
            <person name="Madupu R."/>
            <person name="Nelson W.C."/>
            <person name="Rosovitz M.J."/>
            <person name="Sullivan S.A."/>
            <person name="Khouri H."/>
            <person name="Dimitrov G.I."/>
            <person name="Watkins K.L."/>
            <person name="Mulligan S."/>
            <person name="Benton J."/>
            <person name="Radune D."/>
            <person name="Fisher D.J."/>
            <person name="Atkins H.S."/>
            <person name="Hiscox T."/>
            <person name="Jost B.H."/>
            <person name="Billington S.J."/>
            <person name="Songer J.G."/>
            <person name="McClane B.A."/>
            <person name="Titball R.W."/>
            <person name="Rood J.I."/>
            <person name="Melville S.B."/>
            <person name="Paulsen I.T."/>
        </authorList>
    </citation>
    <scope>NUCLEOTIDE SEQUENCE [LARGE SCALE GENOMIC DNA]</scope>
    <source>
        <strain>ATCC 13124 / DSM 756 / JCM 1290 / NCIMB 6125 / NCTC 8237 / S 107 / Type A</strain>
    </source>
</reference>
<name>XPT2_CLOP1</name>
<accession>Q0TQZ9</accession>
<organism>
    <name type="scientific">Clostridium perfringens (strain ATCC 13124 / DSM 756 / JCM 1290 / NCIMB 6125 / NCTC 8237 / Type A)</name>
    <dbReference type="NCBI Taxonomy" id="195103"/>
    <lineage>
        <taxon>Bacteria</taxon>
        <taxon>Bacillati</taxon>
        <taxon>Bacillota</taxon>
        <taxon>Clostridia</taxon>
        <taxon>Eubacteriales</taxon>
        <taxon>Clostridiaceae</taxon>
        <taxon>Clostridium</taxon>
    </lineage>
</organism>
<dbReference type="EC" id="2.4.2.22" evidence="1"/>
<dbReference type="EMBL" id="CP000246">
    <property type="protein sequence ID" value="ABG84676.1"/>
    <property type="molecule type" value="Genomic_DNA"/>
</dbReference>
<dbReference type="RefSeq" id="WP_003465824.1">
    <property type="nucleotide sequence ID" value="NC_008261.1"/>
</dbReference>
<dbReference type="SMR" id="Q0TQZ9"/>
<dbReference type="STRING" id="195103.CPF_1498"/>
<dbReference type="PaxDb" id="195103-CPF_1498"/>
<dbReference type="KEGG" id="cpf:CPF_1498"/>
<dbReference type="eggNOG" id="COG0503">
    <property type="taxonomic scope" value="Bacteria"/>
</dbReference>
<dbReference type="HOGENOM" id="CLU_099015_0_0_9"/>
<dbReference type="UniPathway" id="UPA00602">
    <property type="reaction ID" value="UER00658"/>
</dbReference>
<dbReference type="Proteomes" id="UP000001823">
    <property type="component" value="Chromosome"/>
</dbReference>
<dbReference type="GO" id="GO:0005737">
    <property type="term" value="C:cytoplasm"/>
    <property type="evidence" value="ECO:0007669"/>
    <property type="project" value="UniProtKB-SubCell"/>
</dbReference>
<dbReference type="GO" id="GO:0000310">
    <property type="term" value="F:xanthine phosphoribosyltransferase activity"/>
    <property type="evidence" value="ECO:0007669"/>
    <property type="project" value="UniProtKB-UniRule"/>
</dbReference>
<dbReference type="GO" id="GO:0006166">
    <property type="term" value="P:purine ribonucleoside salvage"/>
    <property type="evidence" value="ECO:0007669"/>
    <property type="project" value="UniProtKB-KW"/>
</dbReference>
<dbReference type="GO" id="GO:0046110">
    <property type="term" value="P:xanthine metabolic process"/>
    <property type="evidence" value="ECO:0007669"/>
    <property type="project" value="InterPro"/>
</dbReference>
<dbReference type="GO" id="GO:0032265">
    <property type="term" value="P:XMP salvage"/>
    <property type="evidence" value="ECO:0007669"/>
    <property type="project" value="UniProtKB-UniRule"/>
</dbReference>
<dbReference type="CDD" id="cd06223">
    <property type="entry name" value="PRTases_typeI"/>
    <property type="match status" value="1"/>
</dbReference>
<dbReference type="Gene3D" id="3.40.50.2020">
    <property type="match status" value="1"/>
</dbReference>
<dbReference type="HAMAP" id="MF_01184">
    <property type="entry name" value="XPRTase"/>
    <property type="match status" value="1"/>
</dbReference>
<dbReference type="InterPro" id="IPR000836">
    <property type="entry name" value="PRibTrfase_dom"/>
</dbReference>
<dbReference type="InterPro" id="IPR029057">
    <property type="entry name" value="PRTase-like"/>
</dbReference>
<dbReference type="InterPro" id="IPR050118">
    <property type="entry name" value="Pur/Pyrimidine_PRTase"/>
</dbReference>
<dbReference type="InterPro" id="IPR010079">
    <property type="entry name" value="Xanthine_PRibTrfase"/>
</dbReference>
<dbReference type="NCBIfam" id="NF006671">
    <property type="entry name" value="PRK09219.1"/>
    <property type="match status" value="1"/>
</dbReference>
<dbReference type="NCBIfam" id="TIGR01744">
    <property type="entry name" value="XPRTase"/>
    <property type="match status" value="1"/>
</dbReference>
<dbReference type="PANTHER" id="PTHR43864">
    <property type="entry name" value="HYPOXANTHINE/GUANINE PHOSPHORIBOSYLTRANSFERASE"/>
    <property type="match status" value="1"/>
</dbReference>
<dbReference type="PANTHER" id="PTHR43864:SF1">
    <property type="entry name" value="XANTHINE PHOSPHORIBOSYLTRANSFERASE"/>
    <property type="match status" value="1"/>
</dbReference>
<dbReference type="Pfam" id="PF00156">
    <property type="entry name" value="Pribosyltran"/>
    <property type="match status" value="1"/>
</dbReference>
<dbReference type="SUPFAM" id="SSF53271">
    <property type="entry name" value="PRTase-like"/>
    <property type="match status" value="1"/>
</dbReference>
<proteinExistence type="inferred from homology"/>